<reference key="1">
    <citation type="journal article" date="1998" name="DNA Res.">
        <title>Structural analysis of Arabidopsis thaliana chromosome 5. VI. Sequence features of the regions of 1,367,185 bp covered by 19 physically assigned P1 and TAC clones.</title>
        <authorList>
            <person name="Kotani H."/>
            <person name="Nakamura Y."/>
            <person name="Sato S."/>
            <person name="Asamizu E."/>
            <person name="Kaneko T."/>
            <person name="Miyajima N."/>
            <person name="Tabata S."/>
        </authorList>
    </citation>
    <scope>NUCLEOTIDE SEQUENCE [LARGE SCALE GENOMIC DNA]</scope>
    <source>
        <strain>cv. Columbia</strain>
    </source>
</reference>
<reference key="2">
    <citation type="journal article" date="2017" name="Plant J.">
        <title>Araport11: a complete reannotation of the Arabidopsis thaliana reference genome.</title>
        <authorList>
            <person name="Cheng C.Y."/>
            <person name="Krishnakumar V."/>
            <person name="Chan A.P."/>
            <person name="Thibaud-Nissen F."/>
            <person name="Schobel S."/>
            <person name="Town C.D."/>
        </authorList>
    </citation>
    <scope>GENOME REANNOTATION</scope>
    <source>
        <strain>cv. Columbia</strain>
    </source>
</reference>
<reference key="3">
    <citation type="journal article" date="2003" name="Science">
        <title>Empirical analysis of transcriptional activity in the Arabidopsis genome.</title>
        <authorList>
            <person name="Yamada K."/>
            <person name="Lim J."/>
            <person name="Dale J.M."/>
            <person name="Chen H."/>
            <person name="Shinn P."/>
            <person name="Palm C.J."/>
            <person name="Southwick A.M."/>
            <person name="Wu H.C."/>
            <person name="Kim C.J."/>
            <person name="Nguyen M."/>
            <person name="Pham P.K."/>
            <person name="Cheuk R.F."/>
            <person name="Karlin-Newmann G."/>
            <person name="Liu S.X."/>
            <person name="Lam B."/>
            <person name="Sakano H."/>
            <person name="Wu T."/>
            <person name="Yu G."/>
            <person name="Miranda M."/>
            <person name="Quach H.L."/>
            <person name="Tripp M."/>
            <person name="Chang C.H."/>
            <person name="Lee J.M."/>
            <person name="Toriumi M.J."/>
            <person name="Chan M.M."/>
            <person name="Tang C.C."/>
            <person name="Onodera C.S."/>
            <person name="Deng J.M."/>
            <person name="Akiyama K."/>
            <person name="Ansari Y."/>
            <person name="Arakawa T."/>
            <person name="Banh J."/>
            <person name="Banno F."/>
            <person name="Bowser L."/>
            <person name="Brooks S.Y."/>
            <person name="Carninci P."/>
            <person name="Chao Q."/>
            <person name="Choy N."/>
            <person name="Enju A."/>
            <person name="Goldsmith A.D."/>
            <person name="Gurjal M."/>
            <person name="Hansen N.F."/>
            <person name="Hayashizaki Y."/>
            <person name="Johnson-Hopson C."/>
            <person name="Hsuan V.W."/>
            <person name="Iida K."/>
            <person name="Karnes M."/>
            <person name="Khan S."/>
            <person name="Koesema E."/>
            <person name="Ishida J."/>
            <person name="Jiang P.X."/>
            <person name="Jones T."/>
            <person name="Kawai J."/>
            <person name="Kamiya A."/>
            <person name="Meyers C."/>
            <person name="Nakajima M."/>
            <person name="Narusaka M."/>
            <person name="Seki M."/>
            <person name="Sakurai T."/>
            <person name="Satou M."/>
            <person name="Tamse R."/>
            <person name="Vaysberg M."/>
            <person name="Wallender E.K."/>
            <person name="Wong C."/>
            <person name="Yamamura Y."/>
            <person name="Yuan S."/>
            <person name="Shinozaki K."/>
            <person name="Davis R.W."/>
            <person name="Theologis A."/>
            <person name="Ecker J.R."/>
        </authorList>
    </citation>
    <scope>NUCLEOTIDE SEQUENCE [LARGE SCALE MRNA]</scope>
    <source>
        <strain>cv. Columbia</strain>
    </source>
</reference>
<reference key="4">
    <citation type="submission" date="2002-03" db="EMBL/GenBank/DDBJ databases">
        <title>Full-length cDNA from Arabidopsis thaliana.</title>
        <authorList>
            <person name="Brover V.V."/>
            <person name="Troukhan M.E."/>
            <person name="Alexandrov N.A."/>
            <person name="Lu Y.-P."/>
            <person name="Flavell R.B."/>
            <person name="Feldmann K.A."/>
        </authorList>
    </citation>
    <scope>NUCLEOTIDE SEQUENCE [LARGE SCALE MRNA]</scope>
</reference>
<reference key="5">
    <citation type="journal article" date="2004" name="Prog. Lipid Res.">
        <title>GDSL family of serine esterases/lipases.</title>
        <authorList>
            <person name="Akoh C.C."/>
            <person name="Lee G.-C."/>
            <person name="Liaw Y.-C."/>
            <person name="Huang T.-H."/>
            <person name="Shaw J.-F."/>
        </authorList>
    </citation>
    <scope>REVIEW</scope>
</reference>
<reference key="6">
    <citation type="journal article" date="2008" name="Pak. J. Biol. Sci.">
        <title>Sequence analysis of GDSL lipase gene family in Arabidopsis thaliana.</title>
        <authorList>
            <person name="Ling H."/>
        </authorList>
    </citation>
    <scope>GENE FAMILY</scope>
</reference>
<proteinExistence type="evidence at transcript level"/>
<evidence type="ECO:0000250" key="1"/>
<evidence type="ECO:0000255" key="2"/>
<evidence type="ECO:0000305" key="3"/>
<gene>
    <name type="ordered locus">At5g45670</name>
    <name type="ORF">MRA19.6</name>
</gene>
<comment type="subcellular location">
    <subcellularLocation>
        <location evidence="3">Secreted</location>
    </subcellularLocation>
</comment>
<comment type="similarity">
    <text evidence="3">Belongs to the 'GDSL' lipolytic enzyme family.</text>
</comment>
<accession>Q9FK75</accession>
<accession>Q8LDT8</accession>
<dbReference type="EC" id="3.1.1.-"/>
<dbReference type="EMBL" id="AB012245">
    <property type="protein sequence ID" value="BAB09209.1"/>
    <property type="molecule type" value="Genomic_DNA"/>
</dbReference>
<dbReference type="EMBL" id="CP002688">
    <property type="protein sequence ID" value="AED95282.1"/>
    <property type="molecule type" value="Genomic_DNA"/>
</dbReference>
<dbReference type="EMBL" id="AF446366">
    <property type="protein sequence ID" value="AAL48238.1"/>
    <property type="molecule type" value="mRNA"/>
</dbReference>
<dbReference type="EMBL" id="AY097424">
    <property type="protein sequence ID" value="AAM19940.1"/>
    <property type="molecule type" value="mRNA"/>
</dbReference>
<dbReference type="EMBL" id="AY085805">
    <property type="protein sequence ID" value="AAM63021.1"/>
    <property type="molecule type" value="mRNA"/>
</dbReference>
<dbReference type="RefSeq" id="NP_199379.1">
    <property type="nucleotide sequence ID" value="NM_123934.4"/>
</dbReference>
<dbReference type="SMR" id="Q9FK75"/>
<dbReference type="FunCoup" id="Q9FK75">
    <property type="interactions" value="134"/>
</dbReference>
<dbReference type="STRING" id="3702.Q9FK75"/>
<dbReference type="GlyGen" id="Q9FK75">
    <property type="glycosylation" value="1 site"/>
</dbReference>
<dbReference type="SwissPalm" id="Q9FK75"/>
<dbReference type="PaxDb" id="3702-AT5G45670.1"/>
<dbReference type="ProteomicsDB" id="221992"/>
<dbReference type="EnsemblPlants" id="AT5G45670.1">
    <property type="protein sequence ID" value="AT5G45670.1"/>
    <property type="gene ID" value="AT5G45670"/>
</dbReference>
<dbReference type="GeneID" id="834606"/>
<dbReference type="Gramene" id="AT5G45670.1">
    <property type="protein sequence ID" value="AT5G45670.1"/>
    <property type="gene ID" value="AT5G45670"/>
</dbReference>
<dbReference type="KEGG" id="ath:AT5G45670"/>
<dbReference type="Araport" id="AT5G45670"/>
<dbReference type="TAIR" id="AT5G45670"/>
<dbReference type="eggNOG" id="KOG0017">
    <property type="taxonomic scope" value="Eukaryota"/>
</dbReference>
<dbReference type="HOGENOM" id="CLU_015101_0_0_1"/>
<dbReference type="InParanoid" id="Q9FK75"/>
<dbReference type="OMA" id="MARMCLM"/>
<dbReference type="PhylomeDB" id="Q9FK75"/>
<dbReference type="BioCyc" id="ARA:AT5G45670-MONOMER"/>
<dbReference type="PRO" id="PR:Q9FK75"/>
<dbReference type="Proteomes" id="UP000006548">
    <property type="component" value="Chromosome 5"/>
</dbReference>
<dbReference type="ExpressionAtlas" id="Q9FK75">
    <property type="expression patterns" value="baseline and differential"/>
</dbReference>
<dbReference type="GO" id="GO:0005576">
    <property type="term" value="C:extracellular region"/>
    <property type="evidence" value="ECO:0007669"/>
    <property type="project" value="UniProtKB-SubCell"/>
</dbReference>
<dbReference type="GO" id="GO:0016788">
    <property type="term" value="F:hydrolase activity, acting on ester bonds"/>
    <property type="evidence" value="ECO:0007669"/>
    <property type="project" value="InterPro"/>
</dbReference>
<dbReference type="GO" id="GO:0016042">
    <property type="term" value="P:lipid catabolic process"/>
    <property type="evidence" value="ECO:0007669"/>
    <property type="project" value="UniProtKB-KW"/>
</dbReference>
<dbReference type="CDD" id="cd01837">
    <property type="entry name" value="SGNH_plant_lipase_like"/>
    <property type="match status" value="1"/>
</dbReference>
<dbReference type="Gene3D" id="3.40.50.1110">
    <property type="entry name" value="SGNH hydrolase"/>
    <property type="match status" value="1"/>
</dbReference>
<dbReference type="InterPro" id="IPR001087">
    <property type="entry name" value="GDSL"/>
</dbReference>
<dbReference type="InterPro" id="IPR051238">
    <property type="entry name" value="GDSL_esterase/lipase"/>
</dbReference>
<dbReference type="InterPro" id="IPR036514">
    <property type="entry name" value="SGNH_hydro_sf"/>
</dbReference>
<dbReference type="InterPro" id="IPR035669">
    <property type="entry name" value="SGNH_plant_lipase-like"/>
</dbReference>
<dbReference type="PANTHER" id="PTHR45650:SF27">
    <property type="entry name" value="BNAANNG05710D PROTEIN"/>
    <property type="match status" value="1"/>
</dbReference>
<dbReference type="PANTHER" id="PTHR45650">
    <property type="entry name" value="GDSL-LIKE LIPASE/ACYLHYDROLASE-RELATED"/>
    <property type="match status" value="1"/>
</dbReference>
<dbReference type="Pfam" id="PF00657">
    <property type="entry name" value="Lipase_GDSL"/>
    <property type="match status" value="1"/>
</dbReference>
<protein>
    <recommendedName>
        <fullName>GDSL esterase/lipase At5g45670</fullName>
        <ecNumber>3.1.1.-</ecNumber>
    </recommendedName>
    <alternativeName>
        <fullName>Extracellular lipase At5g45670</fullName>
    </alternativeName>
</protein>
<sequence>MARMSLMIMMIMVAVTMINIAKSDPIAPCYFIFGDSLVDNGNNNQLQSLARANYFPYGIDFAAGPTGRFSNGLTTVDVIAQLLGFEDYITPYASARGQDILRGVNYASAAAGIRDETGRQLGGRIAFAGQVANHVNTVSQVVNILGDQNEASNYLSKCIYSIGLGSNDYLNNYFMPTFYSTGNQFSPESYADDLVARYTEQLRVLYTNGARKFALIGVGAIGCSPNELAQNSRDGRTCDERINSANRIFNSKLISIVDAFNQNTPDAKFTYINAYGIFQDIITNPARYGFRVTNAGCCGVGRNNGQITCLPGQAPCLNRNEYVFWDAFHPGEAANIVIGRRSFKREAASDAHPYDIQQLASL</sequence>
<keyword id="KW-0378">Hydrolase</keyword>
<keyword id="KW-0442">Lipid degradation</keyword>
<keyword id="KW-0443">Lipid metabolism</keyword>
<keyword id="KW-1185">Reference proteome</keyword>
<keyword id="KW-0964">Secreted</keyword>
<keyword id="KW-0732">Signal</keyword>
<organism>
    <name type="scientific">Arabidopsis thaliana</name>
    <name type="common">Mouse-ear cress</name>
    <dbReference type="NCBI Taxonomy" id="3702"/>
    <lineage>
        <taxon>Eukaryota</taxon>
        <taxon>Viridiplantae</taxon>
        <taxon>Streptophyta</taxon>
        <taxon>Embryophyta</taxon>
        <taxon>Tracheophyta</taxon>
        <taxon>Spermatophyta</taxon>
        <taxon>Magnoliopsida</taxon>
        <taxon>eudicotyledons</taxon>
        <taxon>Gunneridae</taxon>
        <taxon>Pentapetalae</taxon>
        <taxon>rosids</taxon>
        <taxon>malvids</taxon>
        <taxon>Brassicales</taxon>
        <taxon>Brassicaceae</taxon>
        <taxon>Camelineae</taxon>
        <taxon>Arabidopsis</taxon>
    </lineage>
</organism>
<feature type="signal peptide" evidence="2">
    <location>
        <begin position="1"/>
        <end position="23"/>
    </location>
</feature>
<feature type="chain" id="PRO_0000367422" description="GDSL esterase/lipase At5g45670">
    <location>
        <begin position="24"/>
        <end position="362"/>
    </location>
</feature>
<feature type="active site" description="Nucleophile" evidence="1">
    <location>
        <position position="36"/>
    </location>
</feature>
<feature type="active site" evidence="1">
    <location>
        <position position="326"/>
    </location>
</feature>
<feature type="active site" evidence="1">
    <location>
        <position position="329"/>
    </location>
</feature>
<feature type="sequence conflict" description="In Ref. 4; AAM63021." evidence="3" ref="4">
    <original>D</original>
    <variation>N</variation>
    <location>
        <position position="350"/>
    </location>
</feature>
<name>GDL82_ARATH</name>